<accession>O15126</accession>
<accession>O43587</accession>
<accession>Q6FG23</accession>
<accession>Q96BX1</accession>
<accession>Q96QK5</accession>
<dbReference type="EMBL" id="AF005037">
    <property type="protein sequence ID" value="AAB62722.1"/>
    <property type="molecule type" value="mRNA"/>
</dbReference>
<dbReference type="EMBL" id="AF038966">
    <property type="protein sequence ID" value="AAC39864.1"/>
    <property type="molecule type" value="mRNA"/>
</dbReference>
<dbReference type="EMBL" id="CR542286">
    <property type="protein sequence ID" value="CAG47081.1"/>
    <property type="molecule type" value="mRNA"/>
</dbReference>
<dbReference type="EMBL" id="BC009787">
    <property type="status" value="NOT_ANNOTATED_CDS"/>
    <property type="molecule type" value="mRNA"/>
</dbReference>
<dbReference type="EMBL" id="CH471084">
    <property type="protein sequence ID" value="EAW95814.1"/>
    <property type="molecule type" value="Genomic_DNA"/>
</dbReference>
<dbReference type="EMBL" id="BC015065">
    <property type="protein sequence ID" value="AAH15065.1"/>
    <property type="molecule type" value="mRNA"/>
</dbReference>
<dbReference type="EMBL" id="BC034048">
    <property type="protein sequence ID" value="AAH34048.1"/>
    <property type="molecule type" value="mRNA"/>
</dbReference>
<dbReference type="CCDS" id="CCDS75264.1">
    <molecule id="O15126-1"/>
</dbReference>
<dbReference type="RefSeq" id="NP_001277158.1">
    <property type="nucleotide sequence ID" value="NM_001290229.1"/>
</dbReference>
<dbReference type="RefSeq" id="NP_004857.4">
    <molecule id="O15126-1"/>
    <property type="nucleotide sequence ID" value="NM_004866.5"/>
</dbReference>
<dbReference type="SMR" id="O15126"/>
<dbReference type="BioGRID" id="114899">
    <property type="interactions" value="189"/>
</dbReference>
<dbReference type="CORUM" id="O15126"/>
<dbReference type="FunCoup" id="O15126">
    <property type="interactions" value="2132"/>
</dbReference>
<dbReference type="IntAct" id="O15126">
    <property type="interactions" value="96"/>
</dbReference>
<dbReference type="MINT" id="O15126"/>
<dbReference type="STRING" id="9606.ENSP00000481022"/>
<dbReference type="TCDB" id="8.A.103.1.1">
    <property type="family name" value="the secretory carrier-associated membrane protein (scamp) family"/>
</dbReference>
<dbReference type="GlyGen" id="O15126">
    <property type="glycosylation" value="2 sites, 1 N-linked glycan (1 site), 1 O-linked glycan (1 site)"/>
</dbReference>
<dbReference type="iPTMnet" id="O15126"/>
<dbReference type="MetOSite" id="O15126"/>
<dbReference type="PhosphoSitePlus" id="O15126"/>
<dbReference type="SwissPalm" id="O15126"/>
<dbReference type="BioMuta" id="SCAMP1"/>
<dbReference type="jPOST" id="O15126"/>
<dbReference type="MassIVE" id="O15126"/>
<dbReference type="PaxDb" id="9606-ENSP00000481022"/>
<dbReference type="PeptideAtlas" id="O15126"/>
<dbReference type="ProteomicsDB" id="48463">
    <molecule id="O15126-1"/>
</dbReference>
<dbReference type="ProteomicsDB" id="48464">
    <molecule id="O15126-2"/>
</dbReference>
<dbReference type="Pumba" id="O15126"/>
<dbReference type="Antibodypedia" id="24511">
    <property type="antibodies" value="156 antibodies from 26 providers"/>
</dbReference>
<dbReference type="DNASU" id="9522"/>
<dbReference type="Ensembl" id="ENST00000614488.4">
    <molecule id="O15126-2"/>
    <property type="protein sequence ID" value="ENSP00000478071.1"/>
    <property type="gene ID" value="ENSG00000085365.18"/>
</dbReference>
<dbReference type="Ensembl" id="ENST00000621999.5">
    <molecule id="O15126-1"/>
    <property type="protein sequence ID" value="ENSP00000481022.1"/>
    <property type="gene ID" value="ENSG00000085365.18"/>
</dbReference>
<dbReference type="GeneID" id="9522"/>
<dbReference type="KEGG" id="hsa:9522"/>
<dbReference type="MANE-Select" id="ENST00000621999.5">
    <property type="protein sequence ID" value="ENSP00000481022.1"/>
    <property type="RefSeq nucleotide sequence ID" value="NM_004866.6"/>
    <property type="RefSeq protein sequence ID" value="NP_004857.4"/>
</dbReference>
<dbReference type="UCSC" id="uc032uzx.2">
    <molecule id="O15126-1"/>
    <property type="organism name" value="human"/>
</dbReference>
<dbReference type="AGR" id="HGNC:10563"/>
<dbReference type="CTD" id="9522"/>
<dbReference type="DisGeNET" id="9522"/>
<dbReference type="GeneCards" id="SCAMP1"/>
<dbReference type="HGNC" id="HGNC:10563">
    <property type="gene designation" value="SCAMP1"/>
</dbReference>
<dbReference type="HPA" id="ENSG00000085365">
    <property type="expression patterns" value="Low tissue specificity"/>
</dbReference>
<dbReference type="MIM" id="606911">
    <property type="type" value="gene"/>
</dbReference>
<dbReference type="neXtProt" id="NX_O15126"/>
<dbReference type="OpenTargets" id="ENSG00000085365"/>
<dbReference type="PharmGKB" id="PA34976"/>
<dbReference type="VEuPathDB" id="HostDB:ENSG00000085365"/>
<dbReference type="eggNOG" id="KOG3088">
    <property type="taxonomic scope" value="Eukaryota"/>
</dbReference>
<dbReference type="GeneTree" id="ENSGT00940000157310"/>
<dbReference type="HOGENOM" id="CLU_066546_0_1_1"/>
<dbReference type="InParanoid" id="O15126"/>
<dbReference type="OMA" id="NMVACIF"/>
<dbReference type="OrthoDB" id="242866at2759"/>
<dbReference type="PAN-GO" id="O15126">
    <property type="GO annotations" value="3 GO annotations based on evolutionary models"/>
</dbReference>
<dbReference type="PhylomeDB" id="O15126"/>
<dbReference type="PathwayCommons" id="O15126"/>
<dbReference type="Reactome" id="R-HSA-6798695">
    <property type="pathway name" value="Neutrophil degranulation"/>
</dbReference>
<dbReference type="SignaLink" id="O15126"/>
<dbReference type="SIGNOR" id="O15126"/>
<dbReference type="BioGRID-ORCS" id="9522">
    <property type="hits" value="6 hits in 300 CRISPR screens"/>
</dbReference>
<dbReference type="ChiTaRS" id="SCAMP1">
    <property type="organism name" value="human"/>
</dbReference>
<dbReference type="GeneWiki" id="SCAMP1"/>
<dbReference type="GenomeRNAi" id="9522"/>
<dbReference type="Pharos" id="O15126">
    <property type="development level" value="Tbio"/>
</dbReference>
<dbReference type="PRO" id="PR:O15126"/>
<dbReference type="Proteomes" id="UP000005640">
    <property type="component" value="Chromosome 5"/>
</dbReference>
<dbReference type="RNAct" id="O15126">
    <property type="molecule type" value="protein"/>
</dbReference>
<dbReference type="Bgee" id="ENSG00000085365">
    <property type="expression patterns" value="Expressed in pigmented layer of retina and 219 other cell types or tissues"/>
</dbReference>
<dbReference type="ExpressionAtlas" id="O15126">
    <property type="expression patterns" value="baseline and differential"/>
</dbReference>
<dbReference type="GO" id="GO:0030136">
    <property type="term" value="C:clathrin-coated vesicle"/>
    <property type="evidence" value="ECO:0000250"/>
    <property type="project" value="ParkinsonsUK-UCL"/>
</dbReference>
<dbReference type="GO" id="GO:0016020">
    <property type="term" value="C:membrane"/>
    <property type="evidence" value="ECO:0000314"/>
    <property type="project" value="UniProtKB"/>
</dbReference>
<dbReference type="GO" id="GO:0005886">
    <property type="term" value="C:plasma membrane"/>
    <property type="evidence" value="ECO:0000304"/>
    <property type="project" value="Reactome"/>
</dbReference>
<dbReference type="GO" id="GO:0055038">
    <property type="term" value="C:recycling endosome membrane"/>
    <property type="evidence" value="ECO:0000314"/>
    <property type="project" value="UniProtKB"/>
</dbReference>
<dbReference type="GO" id="GO:0035579">
    <property type="term" value="C:specific granule membrane"/>
    <property type="evidence" value="ECO:0000304"/>
    <property type="project" value="Reactome"/>
</dbReference>
<dbReference type="GO" id="GO:0030672">
    <property type="term" value="C:synaptic vesicle membrane"/>
    <property type="evidence" value="ECO:0007669"/>
    <property type="project" value="Ensembl"/>
</dbReference>
<dbReference type="GO" id="GO:0005802">
    <property type="term" value="C:trans-Golgi network"/>
    <property type="evidence" value="ECO:0000314"/>
    <property type="project" value="UniProtKB"/>
</dbReference>
<dbReference type="GO" id="GO:0032588">
    <property type="term" value="C:trans-Golgi network membrane"/>
    <property type="evidence" value="ECO:0000318"/>
    <property type="project" value="GO_Central"/>
</dbReference>
<dbReference type="GO" id="GO:0042589">
    <property type="term" value="C:zymogen granule membrane"/>
    <property type="evidence" value="ECO:0007669"/>
    <property type="project" value="Ensembl"/>
</dbReference>
<dbReference type="GO" id="GO:0019904">
    <property type="term" value="F:protein domain specific binding"/>
    <property type="evidence" value="ECO:0007669"/>
    <property type="project" value="Ensembl"/>
</dbReference>
<dbReference type="GO" id="GO:0006897">
    <property type="term" value="P:endocytosis"/>
    <property type="evidence" value="ECO:0007669"/>
    <property type="project" value="Ensembl"/>
</dbReference>
<dbReference type="GO" id="GO:0051649">
    <property type="term" value="P:establishment of localization in cell"/>
    <property type="evidence" value="ECO:0007669"/>
    <property type="project" value="Ensembl"/>
</dbReference>
<dbReference type="GO" id="GO:0006887">
    <property type="term" value="P:exocytosis"/>
    <property type="evidence" value="ECO:0007669"/>
    <property type="project" value="Ensembl"/>
</dbReference>
<dbReference type="GO" id="GO:0006892">
    <property type="term" value="P:post-Golgi vesicle-mediated transport"/>
    <property type="evidence" value="ECO:0000304"/>
    <property type="project" value="ProtInc"/>
</dbReference>
<dbReference type="GO" id="GO:0015031">
    <property type="term" value="P:protein transport"/>
    <property type="evidence" value="ECO:0000314"/>
    <property type="project" value="UniProtKB"/>
</dbReference>
<dbReference type="InterPro" id="IPR007273">
    <property type="entry name" value="SCAMP"/>
</dbReference>
<dbReference type="PANTHER" id="PTHR10687:SF8">
    <property type="entry name" value="SECRETORY CARRIER-ASSOCIATED MEMBRANE PROTEIN 1"/>
    <property type="match status" value="1"/>
</dbReference>
<dbReference type="PANTHER" id="PTHR10687">
    <property type="entry name" value="SECRETORY CARRIER-ASSOCIATED MEMBRANE PROTEIN SCAMP"/>
    <property type="match status" value="1"/>
</dbReference>
<dbReference type="Pfam" id="PF04144">
    <property type="entry name" value="SCAMP"/>
    <property type="match status" value="1"/>
</dbReference>
<gene>
    <name type="primary">SCAMP1</name>
    <name type="synonym">SCAMP</name>
</gene>
<proteinExistence type="evidence at protein level"/>
<feature type="initiator methionine" description="Removed" evidence="8 9 10">
    <location>
        <position position="1"/>
    </location>
</feature>
<feature type="chain" id="PRO_0000191250" description="Secretory carrier-associated membrane protein 1">
    <location>
        <begin position="2"/>
        <end position="338"/>
    </location>
</feature>
<feature type="topological domain" description="Cytoplasmic" evidence="3">
    <location>
        <begin position="2"/>
        <end position="155"/>
    </location>
</feature>
<feature type="transmembrane region" description="Helical" evidence="3">
    <location>
        <begin position="156"/>
        <end position="176"/>
    </location>
</feature>
<feature type="topological domain" description="Lumenal" evidence="3">
    <location>
        <begin position="177"/>
        <end position="181"/>
    </location>
</feature>
<feature type="transmembrane region" description="Helical" evidence="3">
    <location>
        <begin position="182"/>
        <end position="202"/>
    </location>
</feature>
<feature type="topological domain" description="Cytoplasmic" evidence="3">
    <location>
        <begin position="203"/>
        <end position="218"/>
    </location>
</feature>
<feature type="transmembrane region" description="Helical" evidence="3">
    <location>
        <begin position="219"/>
        <end position="239"/>
    </location>
</feature>
<feature type="topological domain" description="Lumenal" evidence="3">
    <location>
        <begin position="240"/>
        <end position="261"/>
    </location>
</feature>
<feature type="transmembrane region" description="Helical" evidence="3">
    <location>
        <begin position="262"/>
        <end position="282"/>
    </location>
</feature>
<feature type="topological domain" description="Cytoplasmic" evidence="3">
    <location>
        <begin position="283"/>
        <end position="338"/>
    </location>
</feature>
<feature type="region of interest" description="Disordered" evidence="4">
    <location>
        <begin position="1"/>
        <end position="64"/>
    </location>
</feature>
<feature type="modified residue" description="N-acetylserine" evidence="8 9 10">
    <location>
        <position position="2"/>
    </location>
</feature>
<feature type="modified residue" description="Phosphoserine" evidence="2">
    <location>
        <position position="2"/>
    </location>
</feature>
<feature type="modified residue" description="Phosphothreonine" evidence="11">
    <location>
        <position position="45"/>
    </location>
</feature>
<feature type="splice variant" id="VSP_004380" description="In isoform 2." evidence="6">
    <location>
        <begin position="158"/>
        <end position="338"/>
    </location>
</feature>
<feature type="sequence conflict" description="In Ref. 2; AAC39864." evidence="7" ref="2">
    <original>N</original>
    <variation>I</variation>
    <location>
        <position position="119"/>
    </location>
</feature>
<feature type="sequence conflict" description="In Ref. 2; AAC39864." evidence="7" ref="2">
    <original>D</original>
    <variation>E</variation>
    <location>
        <position position="136"/>
    </location>
</feature>
<feature type="sequence conflict" description="In Ref. 1; AAB62722." evidence="7" ref="1">
    <original>W</original>
    <variation>L</variation>
    <location>
        <position position="247"/>
    </location>
</feature>
<protein>
    <recommendedName>
        <fullName>Secretory carrier-associated membrane protein 1</fullName>
        <shortName>Secretory carrier membrane protein 1</shortName>
    </recommendedName>
</protein>
<name>SCAM1_HUMAN</name>
<keyword id="KW-0007">Acetylation</keyword>
<keyword id="KW-0025">Alternative splicing</keyword>
<keyword id="KW-0967">Endosome</keyword>
<keyword id="KW-0333">Golgi apparatus</keyword>
<keyword id="KW-0472">Membrane</keyword>
<keyword id="KW-0597">Phosphoprotein</keyword>
<keyword id="KW-0653">Protein transport</keyword>
<keyword id="KW-1267">Proteomics identification</keyword>
<keyword id="KW-1185">Reference proteome</keyword>
<keyword id="KW-0812">Transmembrane</keyword>
<keyword id="KW-1133">Transmembrane helix</keyword>
<keyword id="KW-0813">Transport</keyword>
<reference key="1">
    <citation type="journal article" date="1997" name="J. Cell Sci.">
        <title>Three mammalian SCAMPs (secretory carrier membrane proteins) are highly related products of distinct genes having similar subcellular distributions.</title>
        <authorList>
            <person name="Singleton D.R."/>
            <person name="Wu T.T."/>
            <person name="Castle J.D."/>
        </authorList>
    </citation>
    <scope>NUCLEOTIDE SEQUENCE [MRNA] (ISOFORM 1)</scope>
</reference>
<reference key="2">
    <citation type="journal article" date="1998" name="Proc. Natl. Acad. Sci. U.S.A.">
        <title>Identification of genes expressed in human CD34(+) hematopoietic stem/progenitor cells by expressed sequence tags and efficient full-length cDNA cloning.</title>
        <authorList>
            <person name="Mao M."/>
            <person name="Fu G."/>
            <person name="Wu J.-S."/>
            <person name="Zhang Q.-H."/>
            <person name="Zhou J."/>
            <person name="Kan L.-X."/>
            <person name="Huang Q.-H."/>
            <person name="He K.-L."/>
            <person name="Gu B.-W."/>
            <person name="Han Z.-G."/>
            <person name="Shen Y."/>
            <person name="Gu J."/>
            <person name="Yu Y.-P."/>
            <person name="Xu S.-H."/>
            <person name="Wang Y.-X."/>
            <person name="Chen S.-J."/>
            <person name="Chen Z."/>
        </authorList>
    </citation>
    <scope>NUCLEOTIDE SEQUENCE [LARGE SCALE MRNA] (ISOFORM 1)</scope>
    <source>
        <tissue>Umbilical cord blood</tissue>
    </source>
</reference>
<reference key="3">
    <citation type="submission" date="2004-06" db="EMBL/GenBank/DDBJ databases">
        <title>Cloning of human full open reading frames in Gateway(TM) system entry vector (pDONR201).</title>
        <authorList>
            <person name="Ebert L."/>
            <person name="Schick M."/>
            <person name="Neubert P."/>
            <person name="Schatten R."/>
            <person name="Henze S."/>
            <person name="Korn B."/>
        </authorList>
    </citation>
    <scope>NUCLEOTIDE SEQUENCE [LARGE SCALE MRNA] (ISOFORM 1)</scope>
</reference>
<reference key="4">
    <citation type="submission" date="2005-07" db="EMBL/GenBank/DDBJ databases">
        <authorList>
            <person name="Mural R.J."/>
            <person name="Istrail S."/>
            <person name="Sutton G.G."/>
            <person name="Florea L."/>
            <person name="Halpern A.L."/>
            <person name="Mobarry C.M."/>
            <person name="Lippert R."/>
            <person name="Walenz B."/>
            <person name="Shatkay H."/>
            <person name="Dew I."/>
            <person name="Miller J.R."/>
            <person name="Flanigan M.J."/>
            <person name="Edwards N.J."/>
            <person name="Bolanos R."/>
            <person name="Fasulo D."/>
            <person name="Halldorsson B.V."/>
            <person name="Hannenhalli S."/>
            <person name="Turner R."/>
            <person name="Yooseph S."/>
            <person name="Lu F."/>
            <person name="Nusskern D.R."/>
            <person name="Shue B.C."/>
            <person name="Zheng X.H."/>
            <person name="Zhong F."/>
            <person name="Delcher A.L."/>
            <person name="Huson D.H."/>
            <person name="Kravitz S.A."/>
            <person name="Mouchard L."/>
            <person name="Reinert K."/>
            <person name="Remington K.A."/>
            <person name="Clark A.G."/>
            <person name="Waterman M.S."/>
            <person name="Eichler E.E."/>
            <person name="Adams M.D."/>
            <person name="Hunkapiller M.W."/>
            <person name="Myers E.W."/>
            <person name="Venter J.C."/>
        </authorList>
    </citation>
    <scope>NUCLEOTIDE SEQUENCE [LARGE SCALE GENOMIC DNA]</scope>
</reference>
<reference key="5">
    <citation type="journal article" date="2004" name="Genome Res.">
        <title>The status, quality, and expansion of the NIH full-length cDNA project: the Mammalian Gene Collection (MGC).</title>
        <authorList>
            <consortium name="The MGC Project Team"/>
        </authorList>
    </citation>
    <scope>NUCLEOTIDE SEQUENCE [LARGE SCALE MRNA] (ISOFORMS 1 AND 2)</scope>
    <source>
        <tissue>Bone marrow</tissue>
        <tissue>Brain</tissue>
        <tissue>Prostate</tissue>
    </source>
</reference>
<reference key="6">
    <citation type="journal article" date="2004" name="Genome Biol.">
        <title>An unappreciated role for RNA surveillance.</title>
        <authorList>
            <person name="Hillman R.T."/>
            <person name="Green R.E."/>
            <person name="Brenner S.E."/>
        </authorList>
    </citation>
    <scope>SPLICE ISOFORM(S) THAT ARE POTENTIAL NMD TARGET(S)</scope>
</reference>
<reference key="7">
    <citation type="journal article" date="2005" name="J. Cell Sci.">
        <title>Secretory carrier membrane proteins interact and regulate trafficking of the organellar (Na+,K+)/H+ exchanger NHE7.</title>
        <authorList>
            <person name="Lin P.J."/>
            <person name="Williams W.P."/>
            <person name="Luu Y."/>
            <person name="Molday R.S."/>
            <person name="Orlowski J."/>
            <person name="Numata M."/>
        </authorList>
    </citation>
    <scope>SUBCELLULAR LOCATION</scope>
    <scope>INTERACTION WITH SLC9A7</scope>
</reference>
<reference key="8">
    <citation type="journal article" date="2009" name="Anal. Chem.">
        <title>Lys-N and trypsin cover complementary parts of the phosphoproteome in a refined SCX-based approach.</title>
        <authorList>
            <person name="Gauci S."/>
            <person name="Helbig A.O."/>
            <person name="Slijper M."/>
            <person name="Krijgsveld J."/>
            <person name="Heck A.J."/>
            <person name="Mohammed S."/>
        </authorList>
    </citation>
    <scope>ACETYLATION [LARGE SCALE ANALYSIS] AT SER-2</scope>
    <scope>CLEAVAGE OF INITIATOR METHIONINE [LARGE SCALE ANALYSIS]</scope>
    <scope>IDENTIFICATION BY MASS SPECTROMETRY [LARGE SCALE ANALYSIS]</scope>
</reference>
<reference key="9">
    <citation type="journal article" date="2011" name="BMC Syst. Biol.">
        <title>Initial characterization of the human central proteome.</title>
        <authorList>
            <person name="Burkard T.R."/>
            <person name="Planyavsky M."/>
            <person name="Kaupe I."/>
            <person name="Breitwieser F.P."/>
            <person name="Buerckstuemmer T."/>
            <person name="Bennett K.L."/>
            <person name="Superti-Furga G."/>
            <person name="Colinge J."/>
        </authorList>
    </citation>
    <scope>IDENTIFICATION BY MASS SPECTROMETRY [LARGE SCALE ANALYSIS]</scope>
</reference>
<reference key="10">
    <citation type="journal article" date="2012" name="Mol. Cell. Proteomics">
        <title>Comparative large-scale characterisation of plant vs. mammal proteins reveals similar and idiosyncratic N-alpha acetylation features.</title>
        <authorList>
            <person name="Bienvenut W.V."/>
            <person name="Sumpton D."/>
            <person name="Martinez A."/>
            <person name="Lilla S."/>
            <person name="Espagne C."/>
            <person name="Meinnel T."/>
            <person name="Giglione C."/>
        </authorList>
    </citation>
    <scope>ACETYLATION [LARGE SCALE ANALYSIS] AT SER-2</scope>
    <scope>CLEAVAGE OF INITIATOR METHIONINE [LARGE SCALE ANALYSIS]</scope>
    <scope>IDENTIFICATION BY MASS SPECTROMETRY [LARGE SCALE ANALYSIS]</scope>
</reference>
<reference key="11">
    <citation type="journal article" date="2012" name="Proc. Natl. Acad. Sci. U.S.A.">
        <title>N-terminal acetylome analyses and functional insights of the N-terminal acetyltransferase NatB.</title>
        <authorList>
            <person name="Van Damme P."/>
            <person name="Lasa M."/>
            <person name="Polevoda B."/>
            <person name="Gazquez C."/>
            <person name="Elosegui-Artola A."/>
            <person name="Kim D.S."/>
            <person name="De Juan-Pardo E."/>
            <person name="Demeyer K."/>
            <person name="Hole K."/>
            <person name="Larrea E."/>
            <person name="Timmerman E."/>
            <person name="Prieto J."/>
            <person name="Arnesen T."/>
            <person name="Sherman F."/>
            <person name="Gevaert K."/>
            <person name="Aldabe R."/>
        </authorList>
    </citation>
    <scope>ACETYLATION [LARGE SCALE ANALYSIS] AT SER-2</scope>
    <scope>CLEAVAGE OF INITIATOR METHIONINE [LARGE SCALE ANALYSIS]</scope>
    <scope>IDENTIFICATION BY MASS SPECTROMETRY [LARGE SCALE ANALYSIS]</scope>
</reference>
<reference key="12">
    <citation type="journal article" date="2013" name="J. Proteome Res.">
        <title>Toward a comprehensive characterization of a human cancer cell phosphoproteome.</title>
        <authorList>
            <person name="Zhou H."/>
            <person name="Di Palma S."/>
            <person name="Preisinger C."/>
            <person name="Peng M."/>
            <person name="Polat A.N."/>
            <person name="Heck A.J."/>
            <person name="Mohammed S."/>
        </authorList>
    </citation>
    <scope>PHOSPHORYLATION [LARGE SCALE ANALYSIS] AT THR-45</scope>
    <scope>IDENTIFICATION BY MASS SPECTROMETRY [LARGE SCALE ANALYSIS]</scope>
    <source>
        <tissue>Erythroleukemia</tissue>
    </source>
</reference>
<comment type="function">
    <text>Functions in post-Golgi recycling pathways. Acts as a recycling carrier to the cell surface.</text>
</comment>
<comment type="subunit">
    <text evidence="1 5">Interacts with SYNRG and ITSN1 (By similarity). Interacts with SLC9A7.</text>
</comment>
<comment type="interaction">
    <interactant intactId="EBI-954338">
        <id>O15126</id>
    </interactant>
    <interactant intactId="EBI-2808808">
        <id>P53367</id>
        <label>ARFIP1</label>
    </interactant>
    <organismsDiffer>false</organismsDiffer>
    <experiments>3</experiments>
</comment>
<comment type="interaction">
    <interactant intactId="EBI-954338">
        <id>O15126</id>
    </interactant>
    <interactant intactId="EBI-638194">
        <id>P53365</id>
        <label>ARFIP2</label>
    </interactant>
    <organismsDiffer>false</organismsDiffer>
    <experiments>3</experiments>
</comment>
<comment type="interaction">
    <interactant intactId="EBI-954338">
        <id>O15126</id>
    </interactant>
    <interactant intactId="EBI-718729">
        <id>P55212</id>
        <label>CASP6</label>
    </interactant>
    <organismsDiffer>false</organismsDiffer>
    <experiments>3</experiments>
</comment>
<comment type="interaction">
    <interactant intactId="EBI-954338">
        <id>O15126</id>
    </interactant>
    <interactant intactId="EBI-349854">
        <id>P13569</id>
        <label>CFTR</label>
    </interactant>
    <organismsDiffer>false</organismsDiffer>
    <experiments>7</experiments>
</comment>
<comment type="interaction">
    <interactant intactId="EBI-954338">
        <id>O15126</id>
    </interactant>
    <interactant intactId="EBI-4324603">
        <id>O75165</id>
        <label>DNAJC13</label>
    </interactant>
    <organismsDiffer>false</organismsDiffer>
    <experiments>3</experiments>
</comment>
<comment type="interaction">
    <interactant intactId="EBI-954338">
        <id>O15126</id>
    </interactant>
    <interactant intactId="EBI-9304251">
        <id>Q05329</id>
        <label>GAD2</label>
    </interactant>
    <organismsDiffer>false</organismsDiffer>
    <experiments>3</experiments>
</comment>
<comment type="interaction">
    <interactant intactId="EBI-954338">
        <id>O15126</id>
    </interactant>
    <interactant intactId="EBI-21591415">
        <id>P13473-2</id>
        <label>LAMP2</label>
    </interactant>
    <organismsDiffer>false</organismsDiffer>
    <experiments>3</experiments>
</comment>
<comment type="interaction">
    <interactant intactId="EBI-954338">
        <id>O15126</id>
    </interactant>
    <interactant intactId="EBI-7825321">
        <id>Q96E29</id>
        <label>MTERF3</label>
    </interactant>
    <organismsDiffer>false</organismsDiffer>
    <experiments>3</experiments>
</comment>
<comment type="interaction">
    <interactant intactId="EBI-954338">
        <id>O15126</id>
    </interactant>
    <interactant intactId="EBI-11978907">
        <id>Q9ULP0-2</id>
        <label>NDRG4</label>
    </interactant>
    <organismsDiffer>false</organismsDiffer>
    <experiments>3</experiments>
</comment>
<comment type="interaction">
    <interactant intactId="EBI-954338">
        <id>O15126</id>
    </interactant>
    <interactant intactId="EBI-741171">
        <id>Q96AL5</id>
        <label>PBX3</label>
    </interactant>
    <organismsDiffer>false</organismsDiffer>
    <experiments>3</experiments>
</comment>
<comment type="interaction">
    <interactant intactId="EBI-954338">
        <id>O15126</id>
    </interactant>
    <interactant intactId="EBI-2563309">
        <id>P49585</id>
        <label>PCYT1A</label>
    </interactant>
    <organismsDiffer>false</organismsDiffer>
    <experiments>3</experiments>
</comment>
<comment type="interaction">
    <interactant intactId="EBI-954338">
        <id>O15126</id>
    </interactant>
    <interactant intactId="EBI-5280197">
        <id>O75400-2</id>
        <label>PRPF40A</label>
    </interactant>
    <organismsDiffer>false</organismsDiffer>
    <experiments>3</experiments>
</comment>
<comment type="interaction">
    <interactant intactId="EBI-954338">
        <id>O15126</id>
    </interactant>
    <interactant intactId="EBI-742898">
        <id>P43378</id>
        <label>PTPN9</label>
    </interactant>
    <organismsDiffer>false</organismsDiffer>
    <experiments>3</experiments>
</comment>
<comment type="interaction">
    <interactant intactId="EBI-954338">
        <id>O15126</id>
    </interactant>
    <interactant intactId="EBI-2623095">
        <id>Q9Y371</id>
        <label>SH3GLB1</label>
    </interactant>
    <organismsDiffer>false</organismsDiffer>
    <experiments>3</experiments>
</comment>
<comment type="interaction">
    <interactant intactId="EBI-954338">
        <id>O15126</id>
    </interactant>
    <interactant intactId="EBI-742688">
        <id>Q9NZD8</id>
        <label>SPG21</label>
    </interactant>
    <organismsDiffer>false</organismsDiffer>
    <experiments>3</experiments>
</comment>
<comment type="interaction">
    <interactant intactId="EBI-954338">
        <id>O15126</id>
    </interactant>
    <interactant intactId="EBI-10172380">
        <id>Q5VWN6-2</id>
        <label>TASOR2</label>
    </interactant>
    <organismsDiffer>false</organismsDiffer>
    <experiments>3</experiments>
</comment>
<comment type="interaction">
    <interactant intactId="EBI-954338">
        <id>O15126</id>
    </interactant>
    <interactant intactId="EBI-702328">
        <id>Q969Z0</id>
        <label>TBRG4</label>
    </interactant>
    <organismsDiffer>false</organismsDiffer>
    <experiments>3</experiments>
</comment>
<comment type="interaction">
    <interactant intactId="EBI-954338">
        <id>O15126</id>
    </interactant>
    <interactant intactId="EBI-726691">
        <id>Q8WY91</id>
        <label>THAP4</label>
    </interactant>
    <organismsDiffer>false</organismsDiffer>
    <experiments>3</experiments>
</comment>
<comment type="interaction">
    <interactant intactId="EBI-954338">
        <id>O15126</id>
    </interactant>
    <interactant intactId="EBI-10210710">
        <id>P49638</id>
        <label>TTPA</label>
    </interactant>
    <organismsDiffer>false</organismsDiffer>
    <experiments>3</experiments>
</comment>
<comment type="interaction">
    <interactant intactId="EBI-954338">
        <id>O15126</id>
    </interactant>
    <interactant intactId="EBI-10182121">
        <id>Q8NF64-2</id>
        <label>ZMIZ2</label>
    </interactant>
    <organismsDiffer>false</organismsDiffer>
    <experiments>3</experiments>
</comment>
<comment type="subcellular location">
    <subcellularLocation>
        <location evidence="5">Golgi apparatus</location>
        <location evidence="5">trans-Golgi network membrane</location>
        <topology evidence="5">Multi-pass membrane protein</topology>
    </subcellularLocation>
    <subcellularLocation>
        <location evidence="5">Recycling endosome membrane</location>
        <topology evidence="5">Multi-pass membrane protein</topology>
    </subcellularLocation>
</comment>
<comment type="alternative products">
    <event type="alternative splicing"/>
    <isoform>
        <id>O15126-1</id>
        <name>1</name>
        <sequence type="displayed"/>
    </isoform>
    <isoform>
        <id>O15126-2</id>
        <name>2</name>
        <sequence type="described" ref="VSP_004380"/>
    </isoform>
</comment>
<comment type="tissue specificity">
    <text>Widely expressed, with highest expression in brain.</text>
</comment>
<comment type="miscellaneous">
    <molecule>Isoform 2</molecule>
    <text evidence="7">May be produced at very low levels due to a premature stop codon in the mRNA, leading to nonsense-mediated mRNA decay.</text>
</comment>
<comment type="similarity">
    <text evidence="7">Belongs to the SCAMP family.</text>
</comment>
<organism>
    <name type="scientific">Homo sapiens</name>
    <name type="common">Human</name>
    <dbReference type="NCBI Taxonomy" id="9606"/>
    <lineage>
        <taxon>Eukaryota</taxon>
        <taxon>Metazoa</taxon>
        <taxon>Chordata</taxon>
        <taxon>Craniata</taxon>
        <taxon>Vertebrata</taxon>
        <taxon>Euteleostomi</taxon>
        <taxon>Mammalia</taxon>
        <taxon>Eutheria</taxon>
        <taxon>Euarchontoglires</taxon>
        <taxon>Primates</taxon>
        <taxon>Haplorrhini</taxon>
        <taxon>Catarrhini</taxon>
        <taxon>Hominidae</taxon>
        <taxon>Homo</taxon>
    </lineage>
</organism>
<sequence>MSDFDSNPFADPDLNNPFKDPSVTQVTRNVPPGLDEYNPFSDSRTPPPGGVKMPNVPNTQPAIMKPTEEHPAYTQIAKEHALAQAELLKRQEELERKAAELDRREREMQNLSQHGRKNNWPPLPSNFPVGPCFYQDFSVDIPVEFQKTVKLMYYLWMFHAVTLFLNIFGCLAWFCVDSARAVDFGLSILWFLLFTPCSFVCWYRPLYGAFRSDSSFRFFVFFFVYICQFAVHVLQAAGFHNWGNCGWISSLTGLNQNIPVGIMMIIIAALFTASAVISLVMFKKVHGLYRTTGASFEKAQQEFATGVMSNKTVQTAAANAASTAASSAAQNAFKGNQI</sequence>
<evidence type="ECO:0000250" key="1"/>
<evidence type="ECO:0000250" key="2">
    <source>
        <dbReference type="UniProtKB" id="P56603"/>
    </source>
</evidence>
<evidence type="ECO:0000255" key="3"/>
<evidence type="ECO:0000256" key="4">
    <source>
        <dbReference type="SAM" id="MobiDB-lite"/>
    </source>
</evidence>
<evidence type="ECO:0000269" key="5">
    <source>
    </source>
</evidence>
<evidence type="ECO:0000303" key="6">
    <source>
    </source>
</evidence>
<evidence type="ECO:0000305" key="7"/>
<evidence type="ECO:0007744" key="8">
    <source>
    </source>
</evidence>
<evidence type="ECO:0007744" key="9">
    <source>
    </source>
</evidence>
<evidence type="ECO:0007744" key="10">
    <source>
    </source>
</evidence>
<evidence type="ECO:0007744" key="11">
    <source>
    </source>
</evidence>